<protein>
    <recommendedName>
        <fullName>2,3-diketo-L-gulonate-binding periplasmic protein YiaO</fullName>
        <shortName>2,3-DKG-binding protein</shortName>
    </recommendedName>
    <alternativeName>
        <fullName>Extracytoplasmic solute receptor protein YiaO</fullName>
    </alternativeName>
</protein>
<proteinExistence type="evidence at protein level"/>
<sequence>MKLRSVTYALFIAGLAAFSTSSLAAQSLRFGYETSQTDSQHIAAKKFNDLLQERTKGELKLKLFPDSTLGNAQAMISGVRGGTIDMEMSGSNNFAGLSPVMNLLDVPFLFRDTAHAHKTLDGKVGDDLKASLEGKGLKVLAYWENGWRDVTNSRAPVKTPADLKGLKIRTNNSPMNIAAFKVFGANPIPMPFAEVYTGLETRTIDAQEHPINVVWSAKFFEVQKFLSLTHHAYSPLLVVINKAKFDGLSPEFQQALVSSAQEAGNYQRKLVAEDQQKIIDGMKEAGVEVITDLDRKAFSDALGNQVRDMFVKDVPQGADLLKAVDEVQ</sequence>
<feature type="signal peptide" evidence="2">
    <location>
        <begin position="1"/>
        <end position="24"/>
    </location>
</feature>
<feature type="chain" id="PRO_0000031813" description="2,3-diketo-L-gulonate-binding periplasmic protein YiaO">
    <location>
        <begin position="25"/>
        <end position="328"/>
    </location>
</feature>
<organism>
    <name type="scientific">Escherichia coli (strain K12)</name>
    <dbReference type="NCBI Taxonomy" id="83333"/>
    <lineage>
        <taxon>Bacteria</taxon>
        <taxon>Pseudomonadati</taxon>
        <taxon>Pseudomonadota</taxon>
        <taxon>Gammaproteobacteria</taxon>
        <taxon>Enterobacterales</taxon>
        <taxon>Enterobacteriaceae</taxon>
        <taxon>Escherichia</taxon>
    </lineage>
</organism>
<evidence type="ECO:0000269" key="1">
    <source>
    </source>
</evidence>
<evidence type="ECO:0000305" key="2"/>
<evidence type="ECO:0000305" key="3">
    <source>
    </source>
</evidence>
<dbReference type="EMBL" id="U00039">
    <property type="protein sequence ID" value="AAB18556.1"/>
    <property type="molecule type" value="Genomic_DNA"/>
</dbReference>
<dbReference type="EMBL" id="U00096">
    <property type="protein sequence ID" value="AAC76603.1"/>
    <property type="molecule type" value="Genomic_DNA"/>
</dbReference>
<dbReference type="EMBL" id="AP009048">
    <property type="protein sequence ID" value="BAE77714.1"/>
    <property type="molecule type" value="Genomic_DNA"/>
</dbReference>
<dbReference type="PIR" id="S47800">
    <property type="entry name" value="S47800"/>
</dbReference>
<dbReference type="RefSeq" id="NP_418036.1">
    <property type="nucleotide sequence ID" value="NC_000913.3"/>
</dbReference>
<dbReference type="RefSeq" id="WP_000776887.1">
    <property type="nucleotide sequence ID" value="NZ_SSZK01000041.1"/>
</dbReference>
<dbReference type="SMR" id="P37676"/>
<dbReference type="BioGRID" id="4262009">
    <property type="interactions" value="5"/>
</dbReference>
<dbReference type="ComplexPortal" id="CPX-4681">
    <property type="entry name" value="YiaMNO tripartite ATP-independent periplasmic transporter complex"/>
</dbReference>
<dbReference type="FunCoup" id="P37676">
    <property type="interactions" value="326"/>
</dbReference>
<dbReference type="STRING" id="511145.b3579"/>
<dbReference type="TCDB" id="2.A.56.1.2">
    <property type="family name" value="the tripartite atp-independent periplasmic transporter (trap-t) family"/>
</dbReference>
<dbReference type="jPOST" id="P37676"/>
<dbReference type="PaxDb" id="511145-b3579"/>
<dbReference type="EnsemblBacteria" id="AAC76603">
    <property type="protein sequence ID" value="AAC76603"/>
    <property type="gene ID" value="b3579"/>
</dbReference>
<dbReference type="GeneID" id="948091"/>
<dbReference type="KEGG" id="ecj:JW3551"/>
<dbReference type="KEGG" id="eco:b3579"/>
<dbReference type="KEGG" id="ecoc:C3026_19405"/>
<dbReference type="PATRIC" id="fig|1411691.4.peg.3133"/>
<dbReference type="EchoBASE" id="EB2191"/>
<dbReference type="eggNOG" id="COG1638">
    <property type="taxonomic scope" value="Bacteria"/>
</dbReference>
<dbReference type="HOGENOM" id="CLU_036176_1_1_6"/>
<dbReference type="InParanoid" id="P37676"/>
<dbReference type="OMA" id="GDMVRKM"/>
<dbReference type="OrthoDB" id="8690069at2"/>
<dbReference type="PhylomeDB" id="P37676"/>
<dbReference type="BioCyc" id="EcoCyc:EG12283-MONOMER"/>
<dbReference type="BioCyc" id="MetaCyc:EG12283-MONOMER"/>
<dbReference type="PRO" id="PR:P37676"/>
<dbReference type="Proteomes" id="UP000000625">
    <property type="component" value="Chromosome"/>
</dbReference>
<dbReference type="GO" id="GO:0016020">
    <property type="term" value="C:membrane"/>
    <property type="evidence" value="ECO:0000303"/>
    <property type="project" value="ComplexPortal"/>
</dbReference>
<dbReference type="GO" id="GO:0030288">
    <property type="term" value="C:outer membrane-bounded periplasmic space"/>
    <property type="evidence" value="ECO:0007669"/>
    <property type="project" value="InterPro"/>
</dbReference>
<dbReference type="GO" id="GO:0031317">
    <property type="term" value="C:tripartite ATP-independent periplasmic transporter complex"/>
    <property type="evidence" value="ECO:0000303"/>
    <property type="project" value="ComplexPortal"/>
</dbReference>
<dbReference type="GO" id="GO:0030246">
    <property type="term" value="F:carbohydrate binding"/>
    <property type="evidence" value="ECO:0000314"/>
    <property type="project" value="EcoCyc"/>
</dbReference>
<dbReference type="GO" id="GO:0034219">
    <property type="term" value="P:carbohydrate transmembrane transport"/>
    <property type="evidence" value="ECO:0000303"/>
    <property type="project" value="ComplexPortal"/>
</dbReference>
<dbReference type="GO" id="GO:0008643">
    <property type="term" value="P:carbohydrate transport"/>
    <property type="evidence" value="ECO:0000314"/>
    <property type="project" value="EcoCyc"/>
</dbReference>
<dbReference type="GO" id="GO:1902075">
    <property type="term" value="P:cellular response to salt"/>
    <property type="evidence" value="ECO:0000303"/>
    <property type="project" value="ComplexPortal"/>
</dbReference>
<dbReference type="GO" id="GO:0006974">
    <property type="term" value="P:DNA damage response"/>
    <property type="evidence" value="ECO:0000270"/>
    <property type="project" value="EcoliWiki"/>
</dbReference>
<dbReference type="GO" id="GO:1900190">
    <property type="term" value="P:regulation of single-species biofilm formation"/>
    <property type="evidence" value="ECO:0000303"/>
    <property type="project" value="ComplexPortal"/>
</dbReference>
<dbReference type="CDD" id="cd13679">
    <property type="entry name" value="PBP2_TRAP_YiaO_like"/>
    <property type="match status" value="1"/>
</dbReference>
<dbReference type="FunFam" id="3.40.190.170:FF:000001">
    <property type="entry name" value="TRAP dicarboxylate transporter, DctP subunit"/>
    <property type="match status" value="1"/>
</dbReference>
<dbReference type="Gene3D" id="3.40.190.170">
    <property type="entry name" value="Bacterial extracellular solute-binding protein, family 7"/>
    <property type="match status" value="1"/>
</dbReference>
<dbReference type="InterPro" id="IPR018389">
    <property type="entry name" value="DctP_fam"/>
</dbReference>
<dbReference type="InterPro" id="IPR004682">
    <property type="entry name" value="TRAP_DctP"/>
</dbReference>
<dbReference type="InterPro" id="IPR038404">
    <property type="entry name" value="TRAP_DctP_sf"/>
</dbReference>
<dbReference type="NCBIfam" id="TIGR00787">
    <property type="entry name" value="dctP"/>
    <property type="match status" value="1"/>
</dbReference>
<dbReference type="NCBIfam" id="NF037995">
    <property type="entry name" value="TRAP_S1"/>
    <property type="match status" value="1"/>
</dbReference>
<dbReference type="PANTHER" id="PTHR33376">
    <property type="match status" value="1"/>
</dbReference>
<dbReference type="PANTHER" id="PTHR33376:SF18">
    <property type="entry name" value="2,3-DIKETO-L-GULONATE-BINDING PERIPLASMIC PROTEIN YIAO"/>
    <property type="match status" value="1"/>
</dbReference>
<dbReference type="Pfam" id="PF03480">
    <property type="entry name" value="DctP"/>
    <property type="match status" value="1"/>
</dbReference>
<dbReference type="PIRSF" id="PIRSF006470">
    <property type="entry name" value="DctB"/>
    <property type="match status" value="1"/>
</dbReference>
<dbReference type="SUPFAM" id="SSF53850">
    <property type="entry name" value="Periplasmic binding protein-like II"/>
    <property type="match status" value="1"/>
</dbReference>
<comment type="function">
    <text evidence="1">Part of the tripartite ATP-independent periplasmic (TRAP) transport system YiaMNO involved in the uptake of 2,3-diketo-L-gulonate. This protein specifically binds 2,3-diketo-L-gulonate. Is not able to bind either L-ascorbate or dehydroascorbate.</text>
</comment>
<comment type="subunit">
    <text>The complex comprises the extracytoplasmic solute receptor protein YiaO, and the two transmembrane proteins YiaM and YiaN.</text>
</comment>
<comment type="subcellular location">
    <subcellularLocation>
        <location evidence="1">Periplasm</location>
    </subcellularLocation>
</comment>
<comment type="mass spectrometry"/>
<comment type="similarity">
    <text evidence="2">Belongs to the bacterial solute-binding protein 7 family.</text>
</comment>
<comment type="caution">
    <text evidence="3">Was originally proposed to be a subunit from an L-xylulose uptake system, but PubMed:16385129 shows that YiaO does not bind L- or D-xylulose.</text>
</comment>
<reference key="1">
    <citation type="journal article" date="1994" name="Nucleic Acids Res.">
        <title>Analysis of the Escherichia coli genome. V. DNA sequence of the region from 76.0 to 81.5 minutes.</title>
        <authorList>
            <person name="Sofia H.J."/>
            <person name="Burland V."/>
            <person name="Daniels D.L."/>
            <person name="Plunkett G. III"/>
            <person name="Blattner F.R."/>
        </authorList>
    </citation>
    <scope>NUCLEOTIDE SEQUENCE [LARGE SCALE GENOMIC DNA]</scope>
    <source>
        <strain>K12 / MG1655 / ATCC 47076</strain>
    </source>
</reference>
<reference key="2">
    <citation type="journal article" date="1997" name="Science">
        <title>The complete genome sequence of Escherichia coli K-12.</title>
        <authorList>
            <person name="Blattner F.R."/>
            <person name="Plunkett G. III"/>
            <person name="Bloch C.A."/>
            <person name="Perna N.T."/>
            <person name="Burland V."/>
            <person name="Riley M."/>
            <person name="Collado-Vides J."/>
            <person name="Glasner J.D."/>
            <person name="Rode C.K."/>
            <person name="Mayhew G.F."/>
            <person name="Gregor J."/>
            <person name="Davis N.W."/>
            <person name="Kirkpatrick H.A."/>
            <person name="Goeden M.A."/>
            <person name="Rose D.J."/>
            <person name="Mau B."/>
            <person name="Shao Y."/>
        </authorList>
    </citation>
    <scope>NUCLEOTIDE SEQUENCE [LARGE SCALE GENOMIC DNA]</scope>
    <source>
        <strain>K12 / MG1655 / ATCC 47076</strain>
    </source>
</reference>
<reference key="3">
    <citation type="journal article" date="2006" name="Mol. Syst. Biol.">
        <title>Highly accurate genome sequences of Escherichia coli K-12 strains MG1655 and W3110.</title>
        <authorList>
            <person name="Hayashi K."/>
            <person name="Morooka N."/>
            <person name="Yamamoto Y."/>
            <person name="Fujita K."/>
            <person name="Isono K."/>
            <person name="Choi S."/>
            <person name="Ohtsubo E."/>
            <person name="Baba T."/>
            <person name="Wanner B.L."/>
            <person name="Mori H."/>
            <person name="Horiuchi T."/>
        </authorList>
    </citation>
    <scope>NUCLEOTIDE SEQUENCE [LARGE SCALE GENOMIC DNA]</scope>
    <source>
        <strain>K12 / W3110 / ATCC 27325 / DSM 5911</strain>
    </source>
</reference>
<reference key="4">
    <citation type="journal article" date="2004" name="Mol. Membr. Biol.">
        <title>Functional characterization of the Escherichia coli K-12 yiaMNO transport protein genes.</title>
        <authorList>
            <person name="Plantinga T.H."/>
            <person name="van der Does C."/>
            <person name="Badia J."/>
            <person name="Aguilar J."/>
            <person name="Konings W.N."/>
            <person name="Driessen A.J.M."/>
        </authorList>
    </citation>
    <scope>PRELIMINARY FUNCTION</scope>
    <source>
        <strain>K12</strain>
    </source>
</reference>
<reference key="5">
    <citation type="journal article" date="2005" name="Microbiology">
        <title>Deletion of the yiaMNO transporter genes affects the growth characteristics of Escherichia coli K-12.</title>
        <authorList>
            <person name="Plantinga T.H."/>
            <person name="van der Does C."/>
            <person name="Tomkiewicz D."/>
            <person name="van Keulen G."/>
            <person name="Konings W.N."/>
            <person name="Driessen A.J.M."/>
        </authorList>
    </citation>
    <scope>DELETION STUDIES</scope>
    <source>
        <strain>K12</strain>
    </source>
</reference>
<reference key="6">
    <citation type="journal article" date="2006" name="Microbiology">
        <title>Novel ligands for the extracellular solute receptors of two bacterial TRAP transporters.</title>
        <authorList>
            <person name="Thomas G.H."/>
            <person name="Southworth T."/>
            <person name="Leon-Kempis M.R."/>
            <person name="Leech A."/>
            <person name="Kelly D.J."/>
        </authorList>
    </citation>
    <scope>FUNCTION</scope>
    <scope>SUBCELLULAR LOCATION</scope>
    <scope>MASS SPECTROMETRY</scope>
    <source>
        <strain>K12 / W3110 / ATCC 27325 / DSM 5911</strain>
    </source>
</reference>
<accession>P37676</accession>
<accession>Q2M7P2</accession>
<name>YIAO_ECOLI</name>
<keyword id="KW-0574">Periplasm</keyword>
<keyword id="KW-1185">Reference proteome</keyword>
<keyword id="KW-0732">Signal</keyword>
<keyword id="KW-0813">Transport</keyword>
<gene>
    <name type="primary">yiaO</name>
    <name type="ordered locus">b3579</name>
    <name type="ordered locus">JW3551</name>
</gene>